<evidence type="ECO:0000250" key="1"/>
<evidence type="ECO:0000255" key="2">
    <source>
        <dbReference type="HAMAP-Rule" id="MF_00291"/>
    </source>
</evidence>
<evidence type="ECO:0000305" key="3"/>
<sequence length="255" mass="28386">MAVISMKQLLEAGVHFGHQTRRWNPKMAKYIFTERNGIHVIDLQQTVKLADQAYEFVRDAAANDAVILFVGTKKQAAEAVADEATRAGQYFINHRWLGGTLTNWGTIQKRIARLKEIKRMEEEGTFDVLPKKEVALLNKQRARLEKFLGGIEDMPRIPDVMYVVDPHKEQIAVKEAKKLGIPVVAMVDTNADPDDIDIIIPANDDAIRAVKLITAKLADAIIEGRQGEDADVAFEADTQADSIEDIVEVVEGDNA</sequence>
<dbReference type="EMBL" id="AE014074">
    <property type="protein sequence ID" value="AAM80389.1"/>
    <property type="molecule type" value="Genomic_DNA"/>
</dbReference>
<dbReference type="RefSeq" id="WP_011055079.1">
    <property type="nucleotide sequence ID" value="NC_004070.1"/>
</dbReference>
<dbReference type="SMR" id="P0DE88"/>
<dbReference type="KEGG" id="spg:SpyM3_1782"/>
<dbReference type="HOGENOM" id="CLU_040318_1_2_9"/>
<dbReference type="Proteomes" id="UP000000564">
    <property type="component" value="Chromosome"/>
</dbReference>
<dbReference type="GO" id="GO:0022627">
    <property type="term" value="C:cytosolic small ribosomal subunit"/>
    <property type="evidence" value="ECO:0007669"/>
    <property type="project" value="TreeGrafter"/>
</dbReference>
<dbReference type="GO" id="GO:0003735">
    <property type="term" value="F:structural constituent of ribosome"/>
    <property type="evidence" value="ECO:0007669"/>
    <property type="project" value="InterPro"/>
</dbReference>
<dbReference type="GO" id="GO:0006412">
    <property type="term" value="P:translation"/>
    <property type="evidence" value="ECO:0007669"/>
    <property type="project" value="UniProtKB-UniRule"/>
</dbReference>
<dbReference type="CDD" id="cd01425">
    <property type="entry name" value="RPS2"/>
    <property type="match status" value="1"/>
</dbReference>
<dbReference type="FunFam" id="1.10.287.610:FF:000001">
    <property type="entry name" value="30S ribosomal protein S2"/>
    <property type="match status" value="1"/>
</dbReference>
<dbReference type="Gene3D" id="3.40.50.10490">
    <property type="entry name" value="Glucose-6-phosphate isomerase like protein, domain 1"/>
    <property type="match status" value="1"/>
</dbReference>
<dbReference type="Gene3D" id="1.10.287.610">
    <property type="entry name" value="Helix hairpin bin"/>
    <property type="match status" value="1"/>
</dbReference>
<dbReference type="HAMAP" id="MF_00291_B">
    <property type="entry name" value="Ribosomal_uS2_B"/>
    <property type="match status" value="1"/>
</dbReference>
<dbReference type="InterPro" id="IPR001865">
    <property type="entry name" value="Ribosomal_uS2"/>
</dbReference>
<dbReference type="InterPro" id="IPR005706">
    <property type="entry name" value="Ribosomal_uS2_bac/mit/plastid"/>
</dbReference>
<dbReference type="InterPro" id="IPR018130">
    <property type="entry name" value="Ribosomal_uS2_CS"/>
</dbReference>
<dbReference type="InterPro" id="IPR023591">
    <property type="entry name" value="Ribosomal_uS2_flav_dom_sf"/>
</dbReference>
<dbReference type="NCBIfam" id="TIGR01011">
    <property type="entry name" value="rpsB_bact"/>
    <property type="match status" value="1"/>
</dbReference>
<dbReference type="PANTHER" id="PTHR12534">
    <property type="entry name" value="30S RIBOSOMAL PROTEIN S2 PROKARYOTIC AND ORGANELLAR"/>
    <property type="match status" value="1"/>
</dbReference>
<dbReference type="PANTHER" id="PTHR12534:SF0">
    <property type="entry name" value="SMALL RIBOSOMAL SUBUNIT PROTEIN US2M"/>
    <property type="match status" value="1"/>
</dbReference>
<dbReference type="Pfam" id="PF00318">
    <property type="entry name" value="Ribosomal_S2"/>
    <property type="match status" value="1"/>
</dbReference>
<dbReference type="PRINTS" id="PR00395">
    <property type="entry name" value="RIBOSOMALS2"/>
</dbReference>
<dbReference type="SUPFAM" id="SSF52313">
    <property type="entry name" value="Ribosomal protein S2"/>
    <property type="match status" value="1"/>
</dbReference>
<dbReference type="PROSITE" id="PS00962">
    <property type="entry name" value="RIBOSOMAL_S2_1"/>
    <property type="match status" value="1"/>
</dbReference>
<proteinExistence type="inferred from homology"/>
<keyword id="KW-0687">Ribonucleoprotein</keyword>
<keyword id="KW-0689">Ribosomal protein</keyword>
<comment type="similarity">
    <text evidence="2">Belongs to the universal ribosomal protein uS2 family.</text>
</comment>
<feature type="initiator methionine" description="Removed" evidence="1">
    <location>
        <position position="1"/>
    </location>
</feature>
<feature type="chain" id="PRO_0000134254" description="Small ribosomal subunit protein uS2">
    <location>
        <begin position="2"/>
        <end position="255"/>
    </location>
</feature>
<organism>
    <name type="scientific">Streptococcus pyogenes serotype M3 (strain ATCC BAA-595 / MGAS315)</name>
    <dbReference type="NCBI Taxonomy" id="198466"/>
    <lineage>
        <taxon>Bacteria</taxon>
        <taxon>Bacillati</taxon>
        <taxon>Bacillota</taxon>
        <taxon>Bacilli</taxon>
        <taxon>Lactobacillales</taxon>
        <taxon>Streptococcaceae</taxon>
        <taxon>Streptococcus</taxon>
    </lineage>
</organism>
<protein>
    <recommendedName>
        <fullName evidence="2">Small ribosomal subunit protein uS2</fullName>
    </recommendedName>
    <alternativeName>
        <fullName evidence="3">30S ribosomal protein S2</fullName>
    </alternativeName>
</protein>
<name>RS2_STRP3</name>
<accession>P0DE88</accession>
<accession>Q8K5L2</accession>
<reference key="1">
    <citation type="journal article" date="2002" name="Proc. Natl. Acad. Sci. U.S.A.">
        <title>Genome sequence of a serotype M3 strain of group A Streptococcus: phage-encoded toxins, the high-virulence phenotype, and clone emergence.</title>
        <authorList>
            <person name="Beres S.B."/>
            <person name="Sylva G.L."/>
            <person name="Barbian K.D."/>
            <person name="Lei B."/>
            <person name="Hoff J.S."/>
            <person name="Mammarella N.D."/>
            <person name="Liu M.-Y."/>
            <person name="Smoot J.C."/>
            <person name="Porcella S.F."/>
            <person name="Parkins L.D."/>
            <person name="Campbell D.S."/>
            <person name="Smith T.M."/>
            <person name="McCormick J.K."/>
            <person name="Leung D.Y.M."/>
            <person name="Schlievert P.M."/>
            <person name="Musser J.M."/>
        </authorList>
    </citation>
    <scope>NUCLEOTIDE SEQUENCE [LARGE SCALE GENOMIC DNA]</scope>
    <source>
        <strain>ATCC BAA-595 / MGAS315</strain>
    </source>
</reference>
<gene>
    <name evidence="2" type="primary">rpsB</name>
    <name type="ordered locus">SpyM3_1782</name>
</gene>